<keyword id="KW-0963">Cytoplasm</keyword>
<keyword id="KW-0238">DNA-binding</keyword>
<keyword id="KW-0240">DNA-directed RNA polymerase</keyword>
<keyword id="KW-0548">Nucleotidyltransferase</keyword>
<keyword id="KW-0804">Transcription</keyword>
<keyword id="KW-0808">Transferase</keyword>
<dbReference type="EC" id="2.7.7.6" evidence="1"/>
<dbReference type="EMBL" id="CP000743">
    <property type="protein sequence ID" value="ABR56371.1"/>
    <property type="molecule type" value="Genomic_DNA"/>
</dbReference>
<dbReference type="RefSeq" id="WP_011973503.1">
    <property type="nucleotide sequence ID" value="NC_009635.1"/>
</dbReference>
<dbReference type="SMR" id="A6UV49"/>
<dbReference type="STRING" id="419665.Maeo_0788"/>
<dbReference type="GeneID" id="5326917"/>
<dbReference type="GeneID" id="75305867"/>
<dbReference type="KEGG" id="mae:Maeo_0788"/>
<dbReference type="eggNOG" id="arCOG04256">
    <property type="taxonomic scope" value="Archaea"/>
</dbReference>
<dbReference type="HOGENOM" id="CLU_037097_1_0_2"/>
<dbReference type="OrthoDB" id="372142at2157"/>
<dbReference type="Proteomes" id="UP000001106">
    <property type="component" value="Chromosome"/>
</dbReference>
<dbReference type="GO" id="GO:0005737">
    <property type="term" value="C:cytoplasm"/>
    <property type="evidence" value="ECO:0007669"/>
    <property type="project" value="UniProtKB-SubCell"/>
</dbReference>
<dbReference type="GO" id="GO:0000428">
    <property type="term" value="C:DNA-directed RNA polymerase complex"/>
    <property type="evidence" value="ECO:0007669"/>
    <property type="project" value="UniProtKB-KW"/>
</dbReference>
<dbReference type="GO" id="GO:0003677">
    <property type="term" value="F:DNA binding"/>
    <property type="evidence" value="ECO:0007669"/>
    <property type="project" value="UniProtKB-UniRule"/>
</dbReference>
<dbReference type="GO" id="GO:0003899">
    <property type="term" value="F:DNA-directed RNA polymerase activity"/>
    <property type="evidence" value="ECO:0007669"/>
    <property type="project" value="UniProtKB-UniRule"/>
</dbReference>
<dbReference type="GO" id="GO:0006351">
    <property type="term" value="P:DNA-templated transcription"/>
    <property type="evidence" value="ECO:0007669"/>
    <property type="project" value="UniProtKB-UniRule"/>
</dbReference>
<dbReference type="CDD" id="cd06528">
    <property type="entry name" value="RNAP_A"/>
    <property type="match status" value="1"/>
</dbReference>
<dbReference type="Gene3D" id="1.10.150.390">
    <property type="match status" value="1"/>
</dbReference>
<dbReference type="HAMAP" id="MF_00411">
    <property type="entry name" value="RNApol_arch_Rpo1C"/>
    <property type="match status" value="1"/>
</dbReference>
<dbReference type="InterPro" id="IPR045867">
    <property type="entry name" value="DNA-dir_RpoC_beta_prime"/>
</dbReference>
<dbReference type="InterPro" id="IPR007081">
    <property type="entry name" value="RNA_pol_Rpb1_5"/>
</dbReference>
<dbReference type="InterPro" id="IPR012757">
    <property type="entry name" value="RPO1C"/>
</dbReference>
<dbReference type="NCBIfam" id="TIGR02389">
    <property type="entry name" value="RNA_pol_rpoA2"/>
    <property type="match status" value="1"/>
</dbReference>
<dbReference type="PANTHER" id="PTHR19376">
    <property type="entry name" value="DNA-DIRECTED RNA POLYMERASE"/>
    <property type="match status" value="1"/>
</dbReference>
<dbReference type="PANTHER" id="PTHR19376:SF32">
    <property type="entry name" value="DNA-DIRECTED RNA POLYMERASE III SUBUNIT RPC1"/>
    <property type="match status" value="1"/>
</dbReference>
<dbReference type="Pfam" id="PF04998">
    <property type="entry name" value="RNA_pol_Rpb1_5"/>
    <property type="match status" value="1"/>
</dbReference>
<dbReference type="SUPFAM" id="SSF64484">
    <property type="entry name" value="beta and beta-prime subunits of DNA dependent RNA-polymerase"/>
    <property type="match status" value="1"/>
</dbReference>
<feature type="chain" id="PRO_1000049925" description="DNA-directed RNA polymerase subunit Rpo1C">
    <location>
        <begin position="1"/>
        <end position="397"/>
    </location>
</feature>
<gene>
    <name evidence="1" type="primary">rpo1C</name>
    <name evidence="1" type="synonym">rpoA2</name>
    <name type="ordered locus">Maeo_0788</name>
</gene>
<organism>
    <name type="scientific">Methanococcus aeolicus (strain ATCC BAA-1280 / DSM 17508 / OCM 812 / Nankai-3)</name>
    <dbReference type="NCBI Taxonomy" id="419665"/>
    <lineage>
        <taxon>Archaea</taxon>
        <taxon>Methanobacteriati</taxon>
        <taxon>Methanobacteriota</taxon>
        <taxon>Methanomada group</taxon>
        <taxon>Methanococci</taxon>
        <taxon>Methanococcales</taxon>
        <taxon>Methanococcaceae</taxon>
        <taxon>Methanococcus</taxon>
    </lineage>
</organism>
<evidence type="ECO:0000255" key="1">
    <source>
        <dbReference type="HAMAP-Rule" id="MF_00411"/>
    </source>
</evidence>
<comment type="function">
    <text evidence="1">DNA-dependent RNA polymerase (RNAP) catalyzes the transcription of DNA into RNA using the four ribonucleoside triphosphates as substrates. Forms part of the jaw domain.</text>
</comment>
<comment type="catalytic activity">
    <reaction evidence="1">
        <text>RNA(n) + a ribonucleoside 5'-triphosphate = RNA(n+1) + diphosphate</text>
        <dbReference type="Rhea" id="RHEA:21248"/>
        <dbReference type="Rhea" id="RHEA-COMP:14527"/>
        <dbReference type="Rhea" id="RHEA-COMP:17342"/>
        <dbReference type="ChEBI" id="CHEBI:33019"/>
        <dbReference type="ChEBI" id="CHEBI:61557"/>
        <dbReference type="ChEBI" id="CHEBI:140395"/>
        <dbReference type="EC" id="2.7.7.6"/>
    </reaction>
</comment>
<comment type="subunit">
    <text evidence="1">Part of the RNA polymerase complex.</text>
</comment>
<comment type="subcellular location">
    <subcellularLocation>
        <location evidence="1">Cytoplasm</location>
    </subcellularLocation>
</comment>
<comment type="similarity">
    <text evidence="1">Belongs to the RNA polymerase beta' chain family.</text>
</comment>
<protein>
    <recommendedName>
        <fullName evidence="1">DNA-directed RNA polymerase subunit Rpo1C</fullName>
        <ecNumber evidence="1">2.7.7.6</ecNumber>
    </recommendedName>
    <alternativeName>
        <fullName evidence="1">DNA-directed RNA polymerase subunit A''</fullName>
    </alternativeName>
</protein>
<name>RPO1C_META3</name>
<accession>A6UV49</accession>
<proteinExistence type="inferred from homology"/>
<sequence length="397" mass="44051">MEKTMLEQKLENTILPLLLKKELINKIISEKIEDENIIRDIISETVKSYERTLVEPNESVGVVAAQSLGEPGTQMTMRTFHYAGVAELNVTLGLPRMIEIVDARKEPSTPTMTVYLTEDYAFDKSKAEEVAKNIESITVQNIAQDIHIDMVKLAINVVLNPESMKQRNITADDVMEAIKKKMKLKIEQEGNILRLIIKTPSLKALRKRIPKVKSIHLKGVPNIPRVIVKKDDTMGEYILHSEGSNLSAVFEIDGVDMVRTTSNNIVEIQDVLGIEAARNAIINEISGVLNQQGLNVDIRHLMVIADIMTADGSVKSIGRHGLSGEKASVLARAAFEETVKHLYSAAEKGHSDKLSGVVENIIVGKPISMGTGCVDVYIDRDYEEGKDLMITVEKEEN</sequence>
<reference key="1">
    <citation type="submission" date="2007-06" db="EMBL/GenBank/DDBJ databases">
        <title>Complete sequence of Methanococcus aeolicus Nankai-3.</title>
        <authorList>
            <consortium name="US DOE Joint Genome Institute"/>
            <person name="Copeland A."/>
            <person name="Lucas S."/>
            <person name="Lapidus A."/>
            <person name="Barry K."/>
            <person name="Glavina del Rio T."/>
            <person name="Dalin E."/>
            <person name="Tice H."/>
            <person name="Pitluck S."/>
            <person name="Chain P."/>
            <person name="Malfatti S."/>
            <person name="Shin M."/>
            <person name="Vergez L."/>
            <person name="Schmutz J."/>
            <person name="Larimer F."/>
            <person name="Land M."/>
            <person name="Hauser L."/>
            <person name="Kyrpides N."/>
            <person name="Lykidis A."/>
            <person name="Sieprawska-Lupa M."/>
            <person name="Whitman W.B."/>
            <person name="Richardson P."/>
        </authorList>
    </citation>
    <scope>NUCLEOTIDE SEQUENCE [LARGE SCALE GENOMIC DNA]</scope>
    <source>
        <strain>ATCC BAA-1280 / DSM 17508 / OCM 812 / Nankai-3</strain>
    </source>
</reference>